<geneLocation type="plasmid">
    <name>pCD1</name>
</geneLocation>
<reference key="1">
    <citation type="journal article" date="1994" name="J. Bacteriol.">
        <title>A low-Ca2+ response (LCR) secretion (ysc) locus lies within the lcrB region of the LCR plasmid in Yersinia pestis.</title>
        <authorList>
            <person name="Fields K.A."/>
            <person name="Plano G.V."/>
            <person name="Straley S.C."/>
        </authorList>
    </citation>
    <scope>NUCLEOTIDE SEQUENCE [GENOMIC DNA]</scope>
    <source>
        <strain>KIM5 / Biovar Mediaevalis</strain>
    </source>
</reference>
<reference key="2">
    <citation type="journal article" date="1998" name="Infect. Immun.">
        <title>DNA sequencing and analysis of the low-Ca2+-response plasmid pCD1 of Yersinia pestis KIM5.</title>
        <authorList>
            <person name="Perry R.D."/>
            <person name="Straley S.C."/>
            <person name="Fetherston J.D."/>
            <person name="Rose D.J."/>
            <person name="Gregor J."/>
            <person name="Blattner F.R."/>
        </authorList>
    </citation>
    <scope>NUCLEOTIDE SEQUENCE [GENOMIC DNA]</scope>
    <source>
        <strain>KIM5 / Biovar Mediaevalis</strain>
    </source>
</reference>
<reference key="3">
    <citation type="journal article" date="1998" name="J. Bacteriol.">
        <title>Structural organization of virulence-associated plasmids of Yersinia pestis.</title>
        <authorList>
            <person name="Hu P."/>
            <person name="Elliott J."/>
            <person name="McCready P."/>
            <person name="Skowronski E."/>
            <person name="Garnes J."/>
            <person name="Kobayashi A."/>
            <person name="Brubaker R.R."/>
            <person name="Garcia E."/>
        </authorList>
    </citation>
    <scope>NUCLEOTIDE SEQUENCE [GENOMIC DNA]</scope>
    <source>
        <strain>KIM5 / Biovar Mediaevalis</strain>
    </source>
</reference>
<reference key="4">
    <citation type="journal article" date="2001" name="Nature">
        <title>Genome sequence of Yersinia pestis, the causative agent of plague.</title>
        <authorList>
            <person name="Parkhill J."/>
            <person name="Wren B.W."/>
            <person name="Thomson N.R."/>
            <person name="Titball R.W."/>
            <person name="Holden M.T.G."/>
            <person name="Prentice M.B."/>
            <person name="Sebaihia M."/>
            <person name="James K.D."/>
            <person name="Churcher C.M."/>
            <person name="Mungall K.L."/>
            <person name="Baker S."/>
            <person name="Basham D."/>
            <person name="Bentley S.D."/>
            <person name="Brooks K."/>
            <person name="Cerdeno-Tarraga A.-M."/>
            <person name="Chillingworth T."/>
            <person name="Cronin A."/>
            <person name="Davies R.M."/>
            <person name="Davis P."/>
            <person name="Dougan G."/>
            <person name="Feltwell T."/>
            <person name="Hamlin N."/>
            <person name="Holroyd S."/>
            <person name="Jagels K."/>
            <person name="Karlyshev A.V."/>
            <person name="Leather S."/>
            <person name="Moule S."/>
            <person name="Oyston P.C.F."/>
            <person name="Quail M.A."/>
            <person name="Rutherford K.M."/>
            <person name="Simmonds M."/>
            <person name="Skelton J."/>
            <person name="Stevens K."/>
            <person name="Whitehead S."/>
            <person name="Barrell B.G."/>
        </authorList>
    </citation>
    <scope>NUCLEOTIDE SEQUENCE [LARGE SCALE GENOMIC DNA]</scope>
    <source>
        <strain>CO-92 / Biovar Orientalis</strain>
    </source>
</reference>
<reference key="5">
    <citation type="journal article" date="2004" name="DNA Res.">
        <title>Complete genome sequence of Yersinia pestis strain 91001, an isolate avirulent to humans.</title>
        <authorList>
            <person name="Song Y."/>
            <person name="Tong Z."/>
            <person name="Wang J."/>
            <person name="Wang L."/>
            <person name="Guo Z."/>
            <person name="Han Y."/>
            <person name="Zhang J."/>
            <person name="Pei D."/>
            <person name="Zhou D."/>
            <person name="Qin H."/>
            <person name="Pang X."/>
            <person name="Han Y."/>
            <person name="Zhai J."/>
            <person name="Li M."/>
            <person name="Cui B."/>
            <person name="Qi Z."/>
            <person name="Jin L."/>
            <person name="Dai R."/>
            <person name="Chen F."/>
            <person name="Li S."/>
            <person name="Ye C."/>
            <person name="Du Z."/>
            <person name="Lin W."/>
            <person name="Wang J."/>
            <person name="Yu J."/>
            <person name="Yang H."/>
            <person name="Wang J."/>
            <person name="Huang P."/>
            <person name="Yang R."/>
        </authorList>
    </citation>
    <scope>NUCLEOTIDE SEQUENCE [LARGE SCALE GENOMIC DNA]</scope>
    <source>
        <strain>91001 / Biovar Mediaevalis</strain>
    </source>
</reference>
<proteinExistence type="inferred from homology"/>
<keyword id="KW-0614">Plasmid</keyword>
<keyword id="KW-0653">Protein transport</keyword>
<keyword id="KW-1185">Reference proteome</keyword>
<keyword id="KW-0813">Transport</keyword>
<keyword id="KW-0843">Virulence</keyword>
<organism>
    <name type="scientific">Yersinia pestis</name>
    <dbReference type="NCBI Taxonomy" id="632"/>
    <lineage>
        <taxon>Bacteria</taxon>
        <taxon>Pseudomonadati</taxon>
        <taxon>Pseudomonadota</taxon>
        <taxon>Gammaproteobacteria</taxon>
        <taxon>Enterobacterales</taxon>
        <taxon>Yersiniaceae</taxon>
        <taxon>Yersinia</taxon>
    </lineage>
</organism>
<feature type="chain" id="PRO_0000184130" description="Yop proteins translocation protein Q">
    <location>
        <begin position="1"/>
        <end position="307"/>
    </location>
</feature>
<sequence length="307" mass="34419">MSLLTLPQAKLSELSLRQRLSHYQQNYLWEEGKLELTVSEPPSSLNCILQLQWKGTHFTLYCFGNDLANWLTADLLGAPFFTLPKELQLALLERQTVFLPKLVCNDIATASLSVTQPLLSLRLSRDNAHISFWLTSAEALFALLPARPNSERIPLPILISLRWHKVYLTLDEVDSLRLGDVLLAPEGSGPNSPVLAYVGENPWGYFQLQSNKLEFIGMSHESDELNPEPLTDLNQLPVQVSFEVGRQILDWHTLTSLEPGSLIDLTTPVDGEVRLLANGRLLGHGRLVEIQGRLGVRIERLTEVTIS</sequence>
<gene>
    <name type="primary">yscQ</name>
    <name type="ordered locus">YPCD1.43</name>
    <name type="ordered locus">y5035</name>
    <name type="ordered locus">y0038</name>
    <name type="ordered locus">YP_pCD40</name>
</gene>
<evidence type="ECO:0000305" key="1"/>
<comment type="function">
    <text>Component of the Yop secretion machinery.</text>
</comment>
<comment type="similarity">
    <text evidence="1">Belongs to the FliN/MopA/SpaO family.</text>
</comment>
<dbReference type="EMBL" id="AF020214">
    <property type="protein sequence ID" value="AAB72200.1"/>
    <property type="molecule type" value="Genomic_DNA"/>
</dbReference>
<dbReference type="EMBL" id="AF074612">
    <property type="protein sequence ID" value="AAC69788.1"/>
    <property type="molecule type" value="Genomic_DNA"/>
</dbReference>
<dbReference type="EMBL" id="AF053946">
    <property type="protein sequence ID" value="AAC62561.1"/>
    <property type="molecule type" value="Genomic_DNA"/>
</dbReference>
<dbReference type="EMBL" id="AL117189">
    <property type="protein sequence ID" value="CAB54920.1"/>
    <property type="molecule type" value="Genomic_DNA"/>
</dbReference>
<dbReference type="EMBL" id="AE017043">
    <property type="protein sequence ID" value="AAS58559.1"/>
    <property type="molecule type" value="Genomic_DNA"/>
</dbReference>
<dbReference type="PIR" id="A36955">
    <property type="entry name" value="A36955"/>
</dbReference>
<dbReference type="RefSeq" id="NP_395177.1">
    <property type="nucleotide sequence ID" value="NC_003131.1"/>
</dbReference>
<dbReference type="RefSeq" id="NP_857739.1">
    <property type="nucleotide sequence ID" value="NC_004836.1"/>
</dbReference>
<dbReference type="RefSeq" id="NP_857934.1">
    <property type="nucleotide sequence ID" value="NC_004839.1"/>
</dbReference>
<dbReference type="RefSeq" id="WP_002212948.1">
    <property type="nucleotide sequence ID" value="NZ_WUCM01000070.1"/>
</dbReference>
<dbReference type="SMR" id="P42713"/>
<dbReference type="IntAct" id="P42713">
    <property type="interactions" value="6"/>
</dbReference>
<dbReference type="PaxDb" id="214092-5832463"/>
<dbReference type="DNASU" id="1149298"/>
<dbReference type="EnsemblBacteria" id="AAS58559">
    <property type="protein sequence ID" value="AAS58559"/>
    <property type="gene ID" value="YP_pCD40"/>
</dbReference>
<dbReference type="KEGG" id="ype:YPCD1.43"/>
<dbReference type="KEGG" id="ypm:YP_pCD40"/>
<dbReference type="PATRIC" id="fig|214092.21.peg.54"/>
<dbReference type="eggNOG" id="COG1886">
    <property type="taxonomic scope" value="Bacteria"/>
</dbReference>
<dbReference type="HOGENOM" id="CLU_896744_0_0_6"/>
<dbReference type="OMA" id="ILANQRC"/>
<dbReference type="OrthoDB" id="182173at2"/>
<dbReference type="Proteomes" id="UP000000815">
    <property type="component" value="Plasmid pCD1"/>
</dbReference>
<dbReference type="Proteomes" id="UP000001019">
    <property type="component" value="Plasmid pCD1"/>
</dbReference>
<dbReference type="GO" id="GO:0071978">
    <property type="term" value="P:bacterial-type flagellum-dependent swarming motility"/>
    <property type="evidence" value="ECO:0000318"/>
    <property type="project" value="GO_Central"/>
</dbReference>
<dbReference type="GO" id="GO:0050918">
    <property type="term" value="P:positive chemotaxis"/>
    <property type="evidence" value="ECO:0000318"/>
    <property type="project" value="GO_Central"/>
</dbReference>
<dbReference type="GO" id="GO:0030254">
    <property type="term" value="P:protein secretion by the type III secretion system"/>
    <property type="evidence" value="ECO:0007669"/>
    <property type="project" value="InterPro"/>
</dbReference>
<dbReference type="Gene3D" id="2.30.330.10">
    <property type="entry name" value="SpoA-like"/>
    <property type="match status" value="1"/>
</dbReference>
<dbReference type="InterPro" id="IPR001543">
    <property type="entry name" value="FliN-like_C"/>
</dbReference>
<dbReference type="InterPro" id="IPR036429">
    <property type="entry name" value="SpoA-like_sf"/>
</dbReference>
<dbReference type="InterPro" id="IPR003283">
    <property type="entry name" value="T3SS_OMP_SpaO"/>
</dbReference>
<dbReference type="InterPro" id="IPR013385">
    <property type="entry name" value="T3SS_SpaO/YscQ/SpaO"/>
</dbReference>
<dbReference type="NCBIfam" id="TIGR02551">
    <property type="entry name" value="SpaO_YscQ"/>
    <property type="match status" value="1"/>
</dbReference>
<dbReference type="PANTHER" id="PTHR30034">
    <property type="entry name" value="FLAGELLAR MOTOR SWITCH PROTEIN FLIM"/>
    <property type="match status" value="1"/>
</dbReference>
<dbReference type="PANTHER" id="PTHR30034:SF6">
    <property type="entry name" value="YOP PROTEINS TRANSLOCATION PROTEIN Q"/>
    <property type="match status" value="1"/>
</dbReference>
<dbReference type="Pfam" id="PF01052">
    <property type="entry name" value="FliMN_C"/>
    <property type="match status" value="1"/>
</dbReference>
<dbReference type="PRINTS" id="PR01339">
    <property type="entry name" value="TYPE3OMOPROT"/>
</dbReference>
<dbReference type="SUPFAM" id="SSF101801">
    <property type="entry name" value="Surface presentation of antigens (SPOA)"/>
    <property type="match status" value="1"/>
</dbReference>
<name>YSCQ_YERPE</name>
<accession>P42713</accession>
<protein>
    <recommendedName>
        <fullName>Yop proteins translocation protein Q</fullName>
    </recommendedName>
</protein>